<keyword id="KW-0963">Cytoplasm</keyword>
<keyword id="KW-0342">GTP-binding</keyword>
<keyword id="KW-0378">Hydrolase</keyword>
<keyword id="KW-0460">Magnesium</keyword>
<keyword id="KW-0479">Metal-binding</keyword>
<keyword id="KW-0547">Nucleotide-binding</keyword>
<keyword id="KW-1185">Reference proteome</keyword>
<sequence>MFYDQAKIYVKGGDGGAGAVAFRREKYVPEGGPSGGDGGRGGKVIFIADEGLRTLVDFRYKRHYKADRGEHGQGKNMHGKSGEDMSVRIPVGTVVKDADTGEILADLIEHGQKVVVANGGRGGRGNARFMSNTNKAPTVAENGEPGEERNLLLELKLLADVGLVGFPNVGKSTIISRISAAKPKIADYHFTTLVPNLGVVELEDGESFVVADIPGLIEGAHTGAGLGHEFLRHTERTRLIFHVLDIAGSEERDPLEDFQIIAEELRQYSQELANRPILIVANKMDIPGAEENLQRLTEKLGEDYRIFPVSAATGEGLKELVYAAAKALPEIPAPQIFVRDEEQHKLTQASAPHRFELTREGDFFVVSGKEIEKHVQMTMFDREDGLYRFQNILKAMGIERALLDEGIKVGDKVRIAGIEFEWEE</sequence>
<proteinExistence type="inferred from homology"/>
<accession>Q24SP0</accession>
<reference key="1">
    <citation type="journal article" date="2006" name="J. Bacteriol.">
        <title>Complete genome sequence of the dehalorespiring bacterium Desulfitobacterium hafniense Y51 and comparison with Dehalococcoides ethenogenes 195.</title>
        <authorList>
            <person name="Nonaka H."/>
            <person name="Keresztes G."/>
            <person name="Shinoda Y."/>
            <person name="Ikenaga Y."/>
            <person name="Abe M."/>
            <person name="Naito K."/>
            <person name="Inatomi K."/>
            <person name="Furukawa K."/>
            <person name="Inui M."/>
            <person name="Yukawa H."/>
        </authorList>
    </citation>
    <scope>NUCLEOTIDE SEQUENCE [LARGE SCALE GENOMIC DNA]</scope>
    <source>
        <strain>Y51</strain>
    </source>
</reference>
<organism>
    <name type="scientific">Desulfitobacterium hafniense (strain Y51)</name>
    <dbReference type="NCBI Taxonomy" id="138119"/>
    <lineage>
        <taxon>Bacteria</taxon>
        <taxon>Bacillati</taxon>
        <taxon>Bacillota</taxon>
        <taxon>Clostridia</taxon>
        <taxon>Eubacteriales</taxon>
        <taxon>Desulfitobacteriaceae</taxon>
        <taxon>Desulfitobacterium</taxon>
    </lineage>
</organism>
<gene>
    <name evidence="1" type="primary">obg</name>
    <name type="ordered locus">DSY3163</name>
</gene>
<protein>
    <recommendedName>
        <fullName evidence="1">GTPase Obg</fullName>
        <ecNumber evidence="1">3.6.5.-</ecNumber>
    </recommendedName>
    <alternativeName>
        <fullName evidence="1">GTP-binding protein Obg</fullName>
    </alternativeName>
</protein>
<feature type="chain" id="PRO_0000385883" description="GTPase Obg">
    <location>
        <begin position="1"/>
        <end position="424"/>
    </location>
</feature>
<feature type="domain" description="Obg" evidence="3">
    <location>
        <begin position="1"/>
        <end position="158"/>
    </location>
</feature>
<feature type="domain" description="OBG-type G" evidence="1">
    <location>
        <begin position="159"/>
        <end position="329"/>
    </location>
</feature>
<feature type="domain" description="OCT" evidence="2">
    <location>
        <begin position="347"/>
        <end position="424"/>
    </location>
</feature>
<feature type="binding site" evidence="1">
    <location>
        <begin position="165"/>
        <end position="172"/>
    </location>
    <ligand>
        <name>GTP</name>
        <dbReference type="ChEBI" id="CHEBI:37565"/>
    </ligand>
</feature>
<feature type="binding site" evidence="1">
    <location>
        <position position="172"/>
    </location>
    <ligand>
        <name>Mg(2+)</name>
        <dbReference type="ChEBI" id="CHEBI:18420"/>
    </ligand>
</feature>
<feature type="binding site" evidence="1">
    <location>
        <begin position="190"/>
        <end position="194"/>
    </location>
    <ligand>
        <name>GTP</name>
        <dbReference type="ChEBI" id="CHEBI:37565"/>
    </ligand>
</feature>
<feature type="binding site" evidence="1">
    <location>
        <position position="192"/>
    </location>
    <ligand>
        <name>Mg(2+)</name>
        <dbReference type="ChEBI" id="CHEBI:18420"/>
    </ligand>
</feature>
<feature type="binding site" evidence="1">
    <location>
        <begin position="212"/>
        <end position="215"/>
    </location>
    <ligand>
        <name>GTP</name>
        <dbReference type="ChEBI" id="CHEBI:37565"/>
    </ligand>
</feature>
<feature type="binding site" evidence="1">
    <location>
        <begin position="282"/>
        <end position="285"/>
    </location>
    <ligand>
        <name>GTP</name>
        <dbReference type="ChEBI" id="CHEBI:37565"/>
    </ligand>
</feature>
<feature type="binding site" evidence="1">
    <location>
        <begin position="310"/>
        <end position="312"/>
    </location>
    <ligand>
        <name>GTP</name>
        <dbReference type="ChEBI" id="CHEBI:37565"/>
    </ligand>
</feature>
<evidence type="ECO:0000255" key="1">
    <source>
        <dbReference type="HAMAP-Rule" id="MF_01454"/>
    </source>
</evidence>
<evidence type="ECO:0000255" key="2">
    <source>
        <dbReference type="PROSITE-ProRule" id="PRU01229"/>
    </source>
</evidence>
<evidence type="ECO:0000255" key="3">
    <source>
        <dbReference type="PROSITE-ProRule" id="PRU01231"/>
    </source>
</evidence>
<name>OBG_DESHY</name>
<dbReference type="EC" id="3.6.5.-" evidence="1"/>
<dbReference type="EMBL" id="AP008230">
    <property type="protein sequence ID" value="BAE84952.1"/>
    <property type="molecule type" value="Genomic_DNA"/>
</dbReference>
<dbReference type="RefSeq" id="WP_011460894.1">
    <property type="nucleotide sequence ID" value="NC_007907.1"/>
</dbReference>
<dbReference type="SMR" id="Q24SP0"/>
<dbReference type="STRING" id="138119.DSY3163"/>
<dbReference type="KEGG" id="dsy:DSY3163"/>
<dbReference type="eggNOG" id="COG0536">
    <property type="taxonomic scope" value="Bacteria"/>
</dbReference>
<dbReference type="HOGENOM" id="CLU_011747_2_1_9"/>
<dbReference type="Proteomes" id="UP000001946">
    <property type="component" value="Chromosome"/>
</dbReference>
<dbReference type="GO" id="GO:0005737">
    <property type="term" value="C:cytoplasm"/>
    <property type="evidence" value="ECO:0007669"/>
    <property type="project" value="UniProtKB-SubCell"/>
</dbReference>
<dbReference type="GO" id="GO:0005525">
    <property type="term" value="F:GTP binding"/>
    <property type="evidence" value="ECO:0007669"/>
    <property type="project" value="UniProtKB-UniRule"/>
</dbReference>
<dbReference type="GO" id="GO:0003924">
    <property type="term" value="F:GTPase activity"/>
    <property type="evidence" value="ECO:0007669"/>
    <property type="project" value="UniProtKB-UniRule"/>
</dbReference>
<dbReference type="GO" id="GO:0000287">
    <property type="term" value="F:magnesium ion binding"/>
    <property type="evidence" value="ECO:0007669"/>
    <property type="project" value="InterPro"/>
</dbReference>
<dbReference type="GO" id="GO:0042254">
    <property type="term" value="P:ribosome biogenesis"/>
    <property type="evidence" value="ECO:0007669"/>
    <property type="project" value="UniProtKB-UniRule"/>
</dbReference>
<dbReference type="CDD" id="cd01898">
    <property type="entry name" value="Obg"/>
    <property type="match status" value="1"/>
</dbReference>
<dbReference type="FunFam" id="2.70.210.12:FF:000001">
    <property type="entry name" value="GTPase Obg"/>
    <property type="match status" value="1"/>
</dbReference>
<dbReference type="Gene3D" id="3.30.300.350">
    <property type="entry name" value="GTP-binding protein OBG, C-terminal domain"/>
    <property type="match status" value="1"/>
</dbReference>
<dbReference type="Gene3D" id="2.70.210.12">
    <property type="entry name" value="GTP1/OBG domain"/>
    <property type="match status" value="1"/>
</dbReference>
<dbReference type="Gene3D" id="3.40.50.300">
    <property type="entry name" value="P-loop containing nucleotide triphosphate hydrolases"/>
    <property type="match status" value="1"/>
</dbReference>
<dbReference type="HAMAP" id="MF_01454">
    <property type="entry name" value="GTPase_Obg"/>
    <property type="match status" value="1"/>
</dbReference>
<dbReference type="InterPro" id="IPR031167">
    <property type="entry name" value="G_OBG"/>
</dbReference>
<dbReference type="InterPro" id="IPR006073">
    <property type="entry name" value="GTP-bd"/>
</dbReference>
<dbReference type="InterPro" id="IPR014100">
    <property type="entry name" value="GTP-bd_Obg/CgtA"/>
</dbReference>
<dbReference type="InterPro" id="IPR036346">
    <property type="entry name" value="GTP-bd_prot_GTP1/OBG_C_sf"/>
</dbReference>
<dbReference type="InterPro" id="IPR006074">
    <property type="entry name" value="GTP1-OBG_CS"/>
</dbReference>
<dbReference type="InterPro" id="IPR006169">
    <property type="entry name" value="GTP1_OBG_dom"/>
</dbReference>
<dbReference type="InterPro" id="IPR036726">
    <property type="entry name" value="GTP1_OBG_dom_sf"/>
</dbReference>
<dbReference type="InterPro" id="IPR045086">
    <property type="entry name" value="OBG_GTPase"/>
</dbReference>
<dbReference type="InterPro" id="IPR015349">
    <property type="entry name" value="OCT_dom"/>
</dbReference>
<dbReference type="InterPro" id="IPR027417">
    <property type="entry name" value="P-loop_NTPase"/>
</dbReference>
<dbReference type="InterPro" id="IPR005225">
    <property type="entry name" value="Small_GTP-bd"/>
</dbReference>
<dbReference type="NCBIfam" id="TIGR02729">
    <property type="entry name" value="Obg_CgtA"/>
    <property type="match status" value="1"/>
</dbReference>
<dbReference type="NCBIfam" id="TIGR03595">
    <property type="entry name" value="Obg_CgtA_exten"/>
    <property type="match status" value="1"/>
</dbReference>
<dbReference type="NCBIfam" id="NF008954">
    <property type="entry name" value="PRK12296.1"/>
    <property type="match status" value="1"/>
</dbReference>
<dbReference type="NCBIfam" id="NF008955">
    <property type="entry name" value="PRK12297.1"/>
    <property type="match status" value="1"/>
</dbReference>
<dbReference type="NCBIfam" id="NF008956">
    <property type="entry name" value="PRK12299.1"/>
    <property type="match status" value="1"/>
</dbReference>
<dbReference type="NCBIfam" id="TIGR00231">
    <property type="entry name" value="small_GTP"/>
    <property type="match status" value="1"/>
</dbReference>
<dbReference type="PANTHER" id="PTHR11702">
    <property type="entry name" value="DEVELOPMENTALLY REGULATED GTP-BINDING PROTEIN-RELATED"/>
    <property type="match status" value="1"/>
</dbReference>
<dbReference type="PANTHER" id="PTHR11702:SF31">
    <property type="entry name" value="MITOCHONDRIAL RIBOSOME-ASSOCIATED GTPASE 2"/>
    <property type="match status" value="1"/>
</dbReference>
<dbReference type="Pfam" id="PF09269">
    <property type="entry name" value="DUF1967"/>
    <property type="match status" value="1"/>
</dbReference>
<dbReference type="Pfam" id="PF01018">
    <property type="entry name" value="GTP1_OBG"/>
    <property type="match status" value="1"/>
</dbReference>
<dbReference type="Pfam" id="PF01926">
    <property type="entry name" value="MMR_HSR1"/>
    <property type="match status" value="1"/>
</dbReference>
<dbReference type="PRINTS" id="PR00326">
    <property type="entry name" value="GTP1OBG"/>
</dbReference>
<dbReference type="SUPFAM" id="SSF102741">
    <property type="entry name" value="Obg GTP-binding protein C-terminal domain"/>
    <property type="match status" value="1"/>
</dbReference>
<dbReference type="SUPFAM" id="SSF82051">
    <property type="entry name" value="Obg GTP-binding protein N-terminal domain"/>
    <property type="match status" value="1"/>
</dbReference>
<dbReference type="SUPFAM" id="SSF52540">
    <property type="entry name" value="P-loop containing nucleoside triphosphate hydrolases"/>
    <property type="match status" value="1"/>
</dbReference>
<dbReference type="PROSITE" id="PS51710">
    <property type="entry name" value="G_OBG"/>
    <property type="match status" value="1"/>
</dbReference>
<dbReference type="PROSITE" id="PS00905">
    <property type="entry name" value="GTP1_OBG"/>
    <property type="match status" value="1"/>
</dbReference>
<dbReference type="PROSITE" id="PS51883">
    <property type="entry name" value="OBG"/>
    <property type="match status" value="1"/>
</dbReference>
<dbReference type="PROSITE" id="PS51881">
    <property type="entry name" value="OCT"/>
    <property type="match status" value="1"/>
</dbReference>
<comment type="function">
    <text evidence="1">An essential GTPase which binds GTP, GDP and possibly (p)ppGpp with moderate affinity, with high nucleotide exchange rates and a fairly low GTP hydrolysis rate. Plays a role in control of the cell cycle, stress response, ribosome biogenesis and in those bacteria that undergo differentiation, in morphogenesis control.</text>
</comment>
<comment type="cofactor">
    <cofactor evidence="1">
        <name>Mg(2+)</name>
        <dbReference type="ChEBI" id="CHEBI:18420"/>
    </cofactor>
</comment>
<comment type="subunit">
    <text evidence="1">Monomer.</text>
</comment>
<comment type="subcellular location">
    <subcellularLocation>
        <location evidence="1">Cytoplasm</location>
    </subcellularLocation>
</comment>
<comment type="similarity">
    <text evidence="1">Belongs to the TRAFAC class OBG-HflX-like GTPase superfamily. OBG GTPase family.</text>
</comment>